<comment type="function">
    <text evidence="2">Involved in cell-cell adhesion. Has both calcium-independent homophilic cell-cell adhesion activity and calcium-independent heterophilic cell-cell adhesion activity with IGSF4, NECTIN1 and NECTIN3. Interaction with EPB41L1 may regulate structure or function of cell-cell junctions (By similarity).</text>
</comment>
<comment type="subunit">
    <text evidence="2">Homodimer. Can form trans-heterodimers with NECTIN3. Interacts with EPB41L1, DLG3, PALS2 and CASK (By similarity).</text>
</comment>
<comment type="subcellular location">
    <subcellularLocation>
        <location evidence="2">Cell membrane</location>
        <topology evidence="2">Single-pass type I membrane protein</topology>
    </subcellularLocation>
    <subcellularLocation>
        <location evidence="2">Cell junction</location>
    </subcellularLocation>
</comment>
<comment type="domain">
    <text evidence="2">The cytoplasmic region mediates interaction with EPB41L1, DLG3, PALS2 and CASK.</text>
</comment>
<comment type="similarity">
    <text evidence="6">Belongs to the nectin family.</text>
</comment>
<sequence>MGAPSALPLLLLLACSWAPGGANLSQDDSQPWTSDETVVAGGTVVLKCQVKDHEDSSLQWSNPAQQTLYFGEKRALRDNRIQLVSSTPHELSISISNVALADEGEYTCSIFTMPVRTAKSLVTVLGIPQKPIITGYKSSLREKETATLNCQSSGSKPAAQLAWRKGDQELHGDQTRIQEDPNGKTFTVSSSVSFQVTRDDDGANVVCSVNHESLKGADRSTSQRIEVLYTPTAMIRPEPAHPREGQKLLLHCEGRGNPVPQQYVWVKEGSEPPLKMTQESALIFPFLNKSDSGTYGCTATSNMGSYTAYFTLNVNDPSPVPSSSSTYHAIIGGIVAFIVFLLLILLIFLGHYLIRHKGTYLTHEAKGSDDAPDADTAIINAEGGQSGGDDKKEYFI</sequence>
<dbReference type="EMBL" id="DQ272743">
    <property type="protein sequence ID" value="ABB85362.1"/>
    <property type="molecule type" value="mRNA"/>
</dbReference>
<dbReference type="RefSeq" id="NP_001040568.1">
    <property type="nucleotide sequence ID" value="NM_001047103.2"/>
</dbReference>
<dbReference type="SMR" id="Q1WIM3"/>
<dbReference type="BioGRID" id="262276">
    <property type="interactions" value="2"/>
</dbReference>
<dbReference type="FunCoup" id="Q1WIM3">
    <property type="interactions" value="774"/>
</dbReference>
<dbReference type="STRING" id="10116.ENSRNOP00000074496"/>
<dbReference type="GlyCosmos" id="Q1WIM3">
    <property type="glycosylation" value="1 site, No reported glycans"/>
</dbReference>
<dbReference type="GlyGen" id="Q1WIM3">
    <property type="glycosylation" value="1 site"/>
</dbReference>
<dbReference type="iPTMnet" id="Q1WIM3"/>
<dbReference type="PhosphoSitePlus" id="Q1WIM3"/>
<dbReference type="PaxDb" id="10116-ENSRNOP00000004613"/>
<dbReference type="GeneID" id="360882"/>
<dbReference type="KEGG" id="rno:360882"/>
<dbReference type="UCSC" id="RGD:1307035">
    <property type="organism name" value="rat"/>
</dbReference>
<dbReference type="AGR" id="RGD:1307035"/>
<dbReference type="CTD" id="57863"/>
<dbReference type="RGD" id="1307035">
    <property type="gene designation" value="Cadm3"/>
</dbReference>
<dbReference type="VEuPathDB" id="HostDB:ENSRNOG00000003365"/>
<dbReference type="eggNOG" id="ENOG502QWJ8">
    <property type="taxonomic scope" value="Eukaryota"/>
</dbReference>
<dbReference type="HOGENOM" id="CLU_047574_1_0_1"/>
<dbReference type="InParanoid" id="Q1WIM3"/>
<dbReference type="PhylomeDB" id="Q1WIM3"/>
<dbReference type="TreeFam" id="TF326804"/>
<dbReference type="Reactome" id="R-RNO-418990">
    <property type="pathway name" value="Adherens junctions interactions"/>
</dbReference>
<dbReference type="Reactome" id="R-RNO-420597">
    <property type="pathway name" value="Nectin/Necl trans heterodimerization"/>
</dbReference>
<dbReference type="PRO" id="PR:Q1WIM3"/>
<dbReference type="Proteomes" id="UP000002494">
    <property type="component" value="Chromosome 13"/>
</dbReference>
<dbReference type="Bgee" id="ENSRNOG00000003365">
    <property type="expression patterns" value="Expressed in cerebellum and 19 other cell types or tissues"/>
</dbReference>
<dbReference type="ExpressionAtlas" id="Q1WIM3">
    <property type="expression patterns" value="baseline and differential"/>
</dbReference>
<dbReference type="GO" id="GO:0005911">
    <property type="term" value="C:cell-cell junction"/>
    <property type="evidence" value="ECO:0000266"/>
    <property type="project" value="RGD"/>
</dbReference>
<dbReference type="GO" id="GO:0098982">
    <property type="term" value="C:GABA-ergic synapse"/>
    <property type="evidence" value="ECO:0000314"/>
    <property type="project" value="SynGO"/>
</dbReference>
<dbReference type="GO" id="GO:0098978">
    <property type="term" value="C:glutamatergic synapse"/>
    <property type="evidence" value="ECO:0000314"/>
    <property type="project" value="SynGO"/>
</dbReference>
<dbReference type="GO" id="GO:0098688">
    <property type="term" value="C:parallel fiber to Purkinje cell synapse"/>
    <property type="evidence" value="ECO:0000266"/>
    <property type="project" value="RGD"/>
</dbReference>
<dbReference type="GO" id="GO:0042734">
    <property type="term" value="C:presynaptic membrane"/>
    <property type="evidence" value="ECO:0000266"/>
    <property type="project" value="RGD"/>
</dbReference>
<dbReference type="GO" id="GO:0042803">
    <property type="term" value="F:protein homodimerization activity"/>
    <property type="evidence" value="ECO:0000266"/>
    <property type="project" value="RGD"/>
</dbReference>
<dbReference type="GO" id="GO:0007157">
    <property type="term" value="P:heterophilic cell-cell adhesion via plasma membrane cell adhesion molecules"/>
    <property type="evidence" value="ECO:0000266"/>
    <property type="project" value="RGD"/>
</dbReference>
<dbReference type="GO" id="GO:0007156">
    <property type="term" value="P:homophilic cell adhesion via plasma membrane adhesion molecules"/>
    <property type="evidence" value="ECO:0000266"/>
    <property type="project" value="RGD"/>
</dbReference>
<dbReference type="GO" id="GO:0008104">
    <property type="term" value="P:protein localization"/>
    <property type="evidence" value="ECO:0000266"/>
    <property type="project" value="RGD"/>
</dbReference>
<dbReference type="GO" id="GO:0099560">
    <property type="term" value="P:synaptic membrane adhesion"/>
    <property type="evidence" value="ECO:0000314"/>
    <property type="project" value="SynGO"/>
</dbReference>
<dbReference type="CDD" id="cd05882">
    <property type="entry name" value="IgV_1_Necl-1"/>
    <property type="match status" value="1"/>
</dbReference>
<dbReference type="FunFam" id="2.60.40.10:FF:000013">
    <property type="entry name" value="cell adhesion molecule 1 isoform X1"/>
    <property type="match status" value="1"/>
</dbReference>
<dbReference type="FunFam" id="2.60.40.10:FF:000510">
    <property type="entry name" value="cell adhesion molecule 3 isoform X1"/>
    <property type="match status" value="1"/>
</dbReference>
<dbReference type="Gene3D" id="2.60.40.10">
    <property type="entry name" value="Immunoglobulins"/>
    <property type="match status" value="3"/>
</dbReference>
<dbReference type="InterPro" id="IPR013162">
    <property type="entry name" value="CD80_C2-set"/>
</dbReference>
<dbReference type="InterPro" id="IPR007110">
    <property type="entry name" value="Ig-like_dom"/>
</dbReference>
<dbReference type="InterPro" id="IPR036179">
    <property type="entry name" value="Ig-like_dom_sf"/>
</dbReference>
<dbReference type="InterPro" id="IPR013783">
    <property type="entry name" value="Ig-like_fold"/>
</dbReference>
<dbReference type="InterPro" id="IPR003599">
    <property type="entry name" value="Ig_sub"/>
</dbReference>
<dbReference type="InterPro" id="IPR003598">
    <property type="entry name" value="Ig_sub2"/>
</dbReference>
<dbReference type="InterPro" id="IPR013106">
    <property type="entry name" value="Ig_V-set"/>
</dbReference>
<dbReference type="InterPro" id="IPR003585">
    <property type="entry name" value="Neurexin-like"/>
</dbReference>
<dbReference type="PANTHER" id="PTHR45889:SF5">
    <property type="entry name" value="CELL ADHESION MOLECULE 3"/>
    <property type="match status" value="1"/>
</dbReference>
<dbReference type="PANTHER" id="PTHR45889">
    <property type="entry name" value="IG-LIKE DOMAIN-CONTAINING PROTEIN"/>
    <property type="match status" value="1"/>
</dbReference>
<dbReference type="Pfam" id="PF08205">
    <property type="entry name" value="C2-set_2"/>
    <property type="match status" value="1"/>
</dbReference>
<dbReference type="Pfam" id="PF13927">
    <property type="entry name" value="Ig_3"/>
    <property type="match status" value="1"/>
</dbReference>
<dbReference type="Pfam" id="PF07686">
    <property type="entry name" value="V-set"/>
    <property type="match status" value="1"/>
</dbReference>
<dbReference type="SMART" id="SM00294">
    <property type="entry name" value="4.1m"/>
    <property type="match status" value="1"/>
</dbReference>
<dbReference type="SMART" id="SM00409">
    <property type="entry name" value="IG"/>
    <property type="match status" value="3"/>
</dbReference>
<dbReference type="SMART" id="SM00408">
    <property type="entry name" value="IGc2"/>
    <property type="match status" value="3"/>
</dbReference>
<dbReference type="SUPFAM" id="SSF48726">
    <property type="entry name" value="Immunoglobulin"/>
    <property type="match status" value="3"/>
</dbReference>
<dbReference type="PROSITE" id="PS50835">
    <property type="entry name" value="IG_LIKE"/>
    <property type="match status" value="3"/>
</dbReference>
<keyword id="KW-0106">Calcium</keyword>
<keyword id="KW-0130">Cell adhesion</keyword>
<keyword id="KW-0965">Cell junction</keyword>
<keyword id="KW-1003">Cell membrane</keyword>
<keyword id="KW-1015">Disulfide bond</keyword>
<keyword id="KW-0325">Glycoprotein</keyword>
<keyword id="KW-0393">Immunoglobulin domain</keyword>
<keyword id="KW-0472">Membrane</keyword>
<keyword id="KW-0597">Phosphoprotein</keyword>
<keyword id="KW-1185">Reference proteome</keyword>
<keyword id="KW-0677">Repeat</keyword>
<keyword id="KW-0732">Signal</keyword>
<keyword id="KW-0812">Transmembrane</keyword>
<keyword id="KW-1133">Transmembrane helix</keyword>
<proteinExistence type="evidence at protein level"/>
<name>CADM3_RAT</name>
<gene>
    <name type="primary">Cadm3</name>
    <name type="synonym">Igsf4b</name>
    <name type="synonym">Necl1</name>
</gene>
<accession>Q1WIM3</accession>
<organism>
    <name type="scientific">Rattus norvegicus</name>
    <name type="common">Rat</name>
    <dbReference type="NCBI Taxonomy" id="10116"/>
    <lineage>
        <taxon>Eukaryota</taxon>
        <taxon>Metazoa</taxon>
        <taxon>Chordata</taxon>
        <taxon>Craniata</taxon>
        <taxon>Vertebrata</taxon>
        <taxon>Euteleostomi</taxon>
        <taxon>Mammalia</taxon>
        <taxon>Eutheria</taxon>
        <taxon>Euarchontoglires</taxon>
        <taxon>Glires</taxon>
        <taxon>Rodentia</taxon>
        <taxon>Myomorpha</taxon>
        <taxon>Muroidea</taxon>
        <taxon>Muridae</taxon>
        <taxon>Murinae</taxon>
        <taxon>Rattus</taxon>
    </lineage>
</organism>
<protein>
    <recommendedName>
        <fullName>Cell adhesion molecule 3</fullName>
    </recommendedName>
    <alternativeName>
        <fullName>Immunoglobulin superfamily member 4B</fullName>
        <shortName>IgSF4B</shortName>
    </alternativeName>
    <alternativeName>
        <fullName>Nectin-like protein 1</fullName>
        <shortName>NECL-1</shortName>
    </alternativeName>
</protein>
<feature type="signal peptide" evidence="1">
    <location>
        <begin position="1"/>
        <end position="22"/>
    </location>
</feature>
<feature type="chain" id="PRO_0000247989" description="Cell adhesion molecule 3">
    <location>
        <begin position="23"/>
        <end position="396"/>
    </location>
</feature>
<feature type="topological domain" description="Extracellular" evidence="3">
    <location>
        <begin position="23"/>
        <end position="328"/>
    </location>
</feature>
<feature type="transmembrane region" description="Helical" evidence="3">
    <location>
        <begin position="329"/>
        <end position="349"/>
    </location>
</feature>
<feature type="topological domain" description="Cytoplasmic" evidence="3">
    <location>
        <begin position="350"/>
        <end position="396"/>
    </location>
</feature>
<feature type="domain" description="Ig-like V-type">
    <location>
        <begin position="23"/>
        <end position="124"/>
    </location>
</feature>
<feature type="domain" description="Ig-like C2-type 1">
    <location>
        <begin position="128"/>
        <end position="226"/>
    </location>
</feature>
<feature type="domain" description="Ig-like C2-type 2">
    <location>
        <begin position="231"/>
        <end position="313"/>
    </location>
</feature>
<feature type="region of interest" description="Disordered" evidence="5">
    <location>
        <begin position="365"/>
        <end position="396"/>
    </location>
</feature>
<feature type="modified residue" description="Phosphoserine" evidence="7">
    <location>
        <position position="386"/>
    </location>
</feature>
<feature type="glycosylation site" description="N-linked (GlcNAc...) asparagine" evidence="3">
    <location>
        <position position="288"/>
    </location>
</feature>
<feature type="disulfide bond" evidence="4">
    <location>
        <begin position="48"/>
        <end position="108"/>
    </location>
</feature>
<feature type="disulfide bond" evidence="4">
    <location>
        <begin position="150"/>
        <end position="207"/>
    </location>
</feature>
<feature type="disulfide bond" evidence="4">
    <location>
        <begin position="252"/>
        <end position="297"/>
    </location>
</feature>
<evidence type="ECO:0000250" key="1">
    <source>
        <dbReference type="UniProtKB" id="Q8N126"/>
    </source>
</evidence>
<evidence type="ECO:0000250" key="2">
    <source>
        <dbReference type="UniProtKB" id="Q99N28"/>
    </source>
</evidence>
<evidence type="ECO:0000255" key="3"/>
<evidence type="ECO:0000255" key="4">
    <source>
        <dbReference type="PROSITE-ProRule" id="PRU00114"/>
    </source>
</evidence>
<evidence type="ECO:0000256" key="5">
    <source>
        <dbReference type="SAM" id="MobiDB-lite"/>
    </source>
</evidence>
<evidence type="ECO:0000305" key="6"/>
<evidence type="ECO:0007744" key="7">
    <source>
    </source>
</evidence>
<reference key="1">
    <citation type="submission" date="2005-11" db="EMBL/GenBank/DDBJ databases">
        <title>The nectin-like proteins: candidate cell adhesion molecules to mediate axo-glial interactions.</title>
        <authorList>
            <person name="Maurel P."/>
            <person name="Einheber S."/>
            <person name="Rubin M.B."/>
            <person name="Galinska J."/>
            <person name="Thaker P."/>
            <person name="Murakami Y."/>
            <person name="Salzer J.L."/>
        </authorList>
    </citation>
    <scope>NUCLEOTIDE SEQUENCE [MRNA]</scope>
    <source>
        <strain>Sprague-Dawley</strain>
    </source>
</reference>
<reference key="2">
    <citation type="journal article" date="2012" name="Nat. Commun.">
        <title>Quantitative maps of protein phosphorylation sites across 14 different rat organs and tissues.</title>
        <authorList>
            <person name="Lundby A."/>
            <person name="Secher A."/>
            <person name="Lage K."/>
            <person name="Nordsborg N.B."/>
            <person name="Dmytriyev A."/>
            <person name="Lundby C."/>
            <person name="Olsen J.V."/>
        </authorList>
    </citation>
    <scope>PHOSPHORYLATION [LARGE SCALE ANALYSIS] AT SER-386</scope>
    <scope>IDENTIFICATION BY MASS SPECTROMETRY [LARGE SCALE ANALYSIS]</scope>
</reference>